<proteinExistence type="inferred from homology"/>
<reference key="1">
    <citation type="journal article" date="1995" name="Science">
        <title>Whole-genome random sequencing and assembly of Haemophilus influenzae Rd.</title>
        <authorList>
            <person name="Fleischmann R.D."/>
            <person name="Adams M.D."/>
            <person name="White O."/>
            <person name="Clayton R.A."/>
            <person name="Kirkness E.F."/>
            <person name="Kerlavage A.R."/>
            <person name="Bult C.J."/>
            <person name="Tomb J.-F."/>
            <person name="Dougherty B.A."/>
            <person name="Merrick J.M."/>
            <person name="McKenney K."/>
            <person name="Sutton G.G."/>
            <person name="FitzHugh W."/>
            <person name="Fields C.A."/>
            <person name="Gocayne J.D."/>
            <person name="Scott J.D."/>
            <person name="Shirley R."/>
            <person name="Liu L.-I."/>
            <person name="Glodek A."/>
            <person name="Kelley J.M."/>
            <person name="Weidman J.F."/>
            <person name="Phillips C.A."/>
            <person name="Spriggs T."/>
            <person name="Hedblom E."/>
            <person name="Cotton M.D."/>
            <person name="Utterback T.R."/>
            <person name="Hanna M.C."/>
            <person name="Nguyen D.T."/>
            <person name="Saudek D.M."/>
            <person name="Brandon R.C."/>
            <person name="Fine L.D."/>
            <person name="Fritchman J.L."/>
            <person name="Fuhrmann J.L."/>
            <person name="Geoghagen N.S.M."/>
            <person name="Gnehm C.L."/>
            <person name="McDonald L.A."/>
            <person name="Small K.V."/>
            <person name="Fraser C.M."/>
            <person name="Smith H.O."/>
            <person name="Venter J.C."/>
        </authorList>
    </citation>
    <scope>NUCLEOTIDE SEQUENCE [LARGE SCALE GENOMIC DNA]</scope>
    <source>
        <strain>ATCC 51907 / DSM 11121 / KW20 / Rd</strain>
    </source>
</reference>
<organism>
    <name type="scientific">Haemophilus influenzae (strain ATCC 51907 / DSM 11121 / KW20 / Rd)</name>
    <dbReference type="NCBI Taxonomy" id="71421"/>
    <lineage>
        <taxon>Bacteria</taxon>
        <taxon>Pseudomonadati</taxon>
        <taxon>Pseudomonadota</taxon>
        <taxon>Gammaproteobacteria</taxon>
        <taxon>Pasteurellales</taxon>
        <taxon>Pasteurellaceae</taxon>
        <taxon>Haemophilus</taxon>
    </lineage>
</organism>
<keyword id="KW-1185">Reference proteome</keyword>
<keyword id="KW-1277">Toxin-antitoxin system</keyword>
<protein>
    <recommendedName>
        <fullName evidence="1">Orphan antixoxin protein TacA</fullName>
    </recommendedName>
</protein>
<comment type="function">
    <text evidence="1">Putative antitoxin component of a toxin-antitoxin (TA) system; its cognate toxin (usually a tRNA acetylase) is unknown.</text>
</comment>
<comment type="similarity">
    <text evidence="1">Belongs to the TacA antitoxin family.</text>
</comment>
<evidence type="ECO:0000305" key="1"/>
<accession>P43995</accession>
<dbReference type="EMBL" id="L42023">
    <property type="protein sequence ID" value="AAC22082.1"/>
    <property type="molecule type" value="Genomic_DNA"/>
</dbReference>
<dbReference type="PIR" id="D64007">
    <property type="entry name" value="D64007"/>
</dbReference>
<dbReference type="RefSeq" id="NP_438582.1">
    <property type="nucleotide sequence ID" value="NC_000907.1"/>
</dbReference>
<dbReference type="SMR" id="P43995"/>
<dbReference type="STRING" id="71421.HI_0420"/>
<dbReference type="EnsemblBacteria" id="AAC22082">
    <property type="protein sequence ID" value="AAC22082"/>
    <property type="gene ID" value="HI_0420"/>
</dbReference>
<dbReference type="KEGG" id="hin:HI_0420"/>
<dbReference type="PATRIC" id="fig|71421.8.peg.440"/>
<dbReference type="eggNOG" id="COG4453">
    <property type="taxonomic scope" value="Bacteria"/>
</dbReference>
<dbReference type="HOGENOM" id="CLU_152494_2_0_6"/>
<dbReference type="OrthoDB" id="5689325at2"/>
<dbReference type="PhylomeDB" id="P43995"/>
<dbReference type="BioCyc" id="HINF71421:G1GJ1-435-MONOMER"/>
<dbReference type="Proteomes" id="UP000000579">
    <property type="component" value="Chromosome"/>
</dbReference>
<dbReference type="GO" id="GO:0006355">
    <property type="term" value="P:regulation of DNA-templated transcription"/>
    <property type="evidence" value="ECO:0007669"/>
    <property type="project" value="InterPro"/>
</dbReference>
<dbReference type="Gene3D" id="1.20.5.780">
    <property type="entry name" value="Single helix bin"/>
    <property type="match status" value="1"/>
</dbReference>
<dbReference type="InterPro" id="IPR010985">
    <property type="entry name" value="Ribbon_hlx_hlx"/>
</dbReference>
<dbReference type="InterPro" id="IPR014795">
    <property type="entry name" value="TacA_1-like"/>
</dbReference>
<dbReference type="PANTHER" id="PTHR35401:SF2">
    <property type="entry name" value="ABC-TYPE TRANSPORT SYSTEM"/>
    <property type="match status" value="1"/>
</dbReference>
<dbReference type="PANTHER" id="PTHR35401">
    <property type="entry name" value="COPG FAMILY HELIX-TURN-HELIX PROTEIN-RELATED-RELATED"/>
    <property type="match status" value="1"/>
</dbReference>
<dbReference type="Pfam" id="PF08681">
    <property type="entry name" value="TacA1"/>
    <property type="match status" value="1"/>
</dbReference>
<dbReference type="SUPFAM" id="SSF47598">
    <property type="entry name" value="Ribbon-helix-helix"/>
    <property type="match status" value="1"/>
</dbReference>
<feature type="chain" id="PRO_0000077921" description="Orphan antixoxin protein TacA">
    <location>
        <begin position="1"/>
        <end position="99"/>
    </location>
</feature>
<sequence>MKTQVTKARLEAKVNIDIYELLKQAAAITGRTLTDFVVSVAYEEAKKTISEHQVLRLAVNDQALLIESLSKPFEPNPSMKNALDVYEAYLSITGKNNDK</sequence>
<gene>
    <name evidence="1" type="primary">tacA</name>
    <name type="ordered locus">HI_0420</name>
</gene>
<name>TACA_HAEIN</name>